<gene>
    <name type="primary">sgmB</name>
    <name type="ORF">DDB_G0293210</name>
</gene>
<name>SGMB_DICDI</name>
<protein>
    <recommendedName>
        <fullName>Sphingomyelin phosphodiesterase B</fullName>
        <ecNumber>3.1.4.-</ecNumber>
    </recommendedName>
    <alternativeName>
        <fullName>Acid sphingomyelinase B</fullName>
        <shortName>aSMase B</shortName>
    </alternativeName>
</protein>
<comment type="function">
    <text evidence="1">Converts sphingomyelin to ceramide.</text>
</comment>
<comment type="cofactor">
    <cofactor evidence="2">
        <name>Zn(2+)</name>
        <dbReference type="ChEBI" id="CHEBI:29105"/>
    </cofactor>
    <text evidence="2">Binds 2 Zn(2+) per subunit.</text>
</comment>
<comment type="subcellular location">
    <subcellularLocation>
        <location evidence="5">Secreted</location>
    </subcellularLocation>
</comment>
<comment type="similarity">
    <text evidence="5">Belongs to the acid sphingomyelinase family.</text>
</comment>
<organism>
    <name type="scientific">Dictyostelium discoideum</name>
    <name type="common">Social amoeba</name>
    <dbReference type="NCBI Taxonomy" id="44689"/>
    <lineage>
        <taxon>Eukaryota</taxon>
        <taxon>Amoebozoa</taxon>
        <taxon>Evosea</taxon>
        <taxon>Eumycetozoa</taxon>
        <taxon>Dictyostelia</taxon>
        <taxon>Dictyosteliales</taxon>
        <taxon>Dictyosteliaceae</taxon>
        <taxon>Dictyostelium</taxon>
    </lineage>
</organism>
<sequence length="637" mass="72204">MKVKAPILLLFVFLINFCFSIKQTQQQNFDITIDNNNYNNNNNNNKNEIINNNNKNNNNLNDEYFEKLGYDTNGTKCDICKFGINQVQKMIASKQGIEDISKYAIDLCTYLHIEKAEVCNGLIPLFANMTYNVLSYPTVTGEYVCGFVGFCPYVPRNSSNIINFPKPKPPHVPPVAPSPNSPTMKILHISDIHVDPVYESGMNADCGEPLCCRAPNGPGVGEKAAGEWGHYLCDINMKMVESMFEFIDQEFGEDIDIVFWTGDNPPHDIWEQTYDSQINASQLVTNLVKKYFGSTAKVFPAIGNHESLPVNSFPLPPGSSWIFNALSYDWSDWVNVDEQVANLQYGGYYTLPVQSGLRVISLNMNWCNNGNLYLAENSTDPANMLQWIVDTLQASEDIGEKVYLVGHIPPGIPDCIDSWSEQLLQIVNRYEDTILASFYGHTHRDEFSVYYTQSDENDPSSPMRASNVIYTTPSVTTYQHQNPSFRIFTVDSNTGYLMESSTYHTDLSQANLNGKPTWLLEYNTTNTYNIPNLTPISMDLAIQNINSSNSMLEDYHVHYYSASPYPESKPCTSISCKLDYICKMKSAAYLKYYECIHHEVNNYLLNESDDDSIKSHKKLNILLDLNNYLNNEVLKSC</sequence>
<keyword id="KW-1015">Disulfide bond</keyword>
<keyword id="KW-0325">Glycoprotein</keyword>
<keyword id="KW-0326">Glycosidase</keyword>
<keyword id="KW-0378">Hydrolase</keyword>
<keyword id="KW-0479">Metal-binding</keyword>
<keyword id="KW-1185">Reference proteome</keyword>
<keyword id="KW-0964">Secreted</keyword>
<keyword id="KW-0732">Signal</keyword>
<keyword id="KW-0862">Zinc</keyword>
<dbReference type="EC" id="3.1.4.-"/>
<dbReference type="EMBL" id="AAFI02000200">
    <property type="protein sequence ID" value="EAL60804.1"/>
    <property type="molecule type" value="Genomic_DNA"/>
</dbReference>
<dbReference type="RefSeq" id="XP_629250.1">
    <property type="nucleotide sequence ID" value="XM_629248.1"/>
</dbReference>
<dbReference type="SMR" id="Q54C16"/>
<dbReference type="FunCoup" id="Q54C16">
    <property type="interactions" value="9"/>
</dbReference>
<dbReference type="STRING" id="44689.Q54C16"/>
<dbReference type="GlyCosmos" id="Q54C16">
    <property type="glycosylation" value="8 sites, No reported glycans"/>
</dbReference>
<dbReference type="GlyGen" id="Q54C16">
    <property type="glycosylation" value="8 sites"/>
</dbReference>
<dbReference type="PaxDb" id="44689-DDB0232049"/>
<dbReference type="EnsemblProtists" id="EAL60804">
    <property type="protein sequence ID" value="EAL60804"/>
    <property type="gene ID" value="DDB_G0293210"/>
</dbReference>
<dbReference type="GeneID" id="8629132"/>
<dbReference type="KEGG" id="ddi:DDB_G0293210"/>
<dbReference type="dictyBase" id="DDB_G0293210">
    <property type="gene designation" value="sgmB"/>
</dbReference>
<dbReference type="VEuPathDB" id="AmoebaDB:DDB_G0293210"/>
<dbReference type="eggNOG" id="KOG3770">
    <property type="taxonomic scope" value="Eukaryota"/>
</dbReference>
<dbReference type="HOGENOM" id="CLU_014743_3_0_1"/>
<dbReference type="InParanoid" id="Q54C16"/>
<dbReference type="OMA" id="VWSQTRK"/>
<dbReference type="PhylomeDB" id="Q54C16"/>
<dbReference type="Reactome" id="R-DDI-9840310">
    <property type="pathway name" value="Glycosphingolipid catabolism"/>
</dbReference>
<dbReference type="PRO" id="PR:Q54C16"/>
<dbReference type="Proteomes" id="UP000002195">
    <property type="component" value="Chromosome 6"/>
</dbReference>
<dbReference type="GO" id="GO:0005615">
    <property type="term" value="C:extracellular space"/>
    <property type="evidence" value="ECO:0000318"/>
    <property type="project" value="GO_Central"/>
</dbReference>
<dbReference type="GO" id="GO:0016020">
    <property type="term" value="C:membrane"/>
    <property type="evidence" value="ECO:0007669"/>
    <property type="project" value="GOC"/>
</dbReference>
<dbReference type="GO" id="GO:0016798">
    <property type="term" value="F:hydrolase activity, acting on glycosyl bonds"/>
    <property type="evidence" value="ECO:0007669"/>
    <property type="project" value="UniProtKB-KW"/>
</dbReference>
<dbReference type="GO" id="GO:0046872">
    <property type="term" value="F:metal ion binding"/>
    <property type="evidence" value="ECO:0007669"/>
    <property type="project" value="UniProtKB-KW"/>
</dbReference>
<dbReference type="GO" id="GO:0008081">
    <property type="term" value="F:phosphoric diester hydrolase activity"/>
    <property type="evidence" value="ECO:0000318"/>
    <property type="project" value="GO_Central"/>
</dbReference>
<dbReference type="GO" id="GO:0004767">
    <property type="term" value="F:sphingomyelin phosphodiesterase activity"/>
    <property type="evidence" value="ECO:0000250"/>
    <property type="project" value="dictyBase"/>
</dbReference>
<dbReference type="GO" id="GO:0046513">
    <property type="term" value="P:ceramide biosynthetic process"/>
    <property type="evidence" value="ECO:0000250"/>
    <property type="project" value="dictyBase"/>
</dbReference>
<dbReference type="GO" id="GO:0006685">
    <property type="term" value="P:sphingomyelin catabolic process"/>
    <property type="evidence" value="ECO:0000250"/>
    <property type="project" value="dictyBase"/>
</dbReference>
<dbReference type="CDD" id="cd00842">
    <property type="entry name" value="MPP_ASMase"/>
    <property type="match status" value="1"/>
</dbReference>
<dbReference type="FunFam" id="1.10.225.10:FF:000010">
    <property type="entry name" value="Sphingomyelin phosphodiesterase"/>
    <property type="match status" value="1"/>
</dbReference>
<dbReference type="FunFam" id="3.60.21.10:FF:000077">
    <property type="entry name" value="Sphingomyelin phosphodiesterase"/>
    <property type="match status" value="1"/>
</dbReference>
<dbReference type="Gene3D" id="3.60.21.10">
    <property type="match status" value="1"/>
</dbReference>
<dbReference type="Gene3D" id="1.10.225.10">
    <property type="entry name" value="Saposin-like"/>
    <property type="match status" value="1"/>
</dbReference>
<dbReference type="InterPro" id="IPR045473">
    <property type="entry name" value="ASM_C"/>
</dbReference>
<dbReference type="InterPro" id="IPR041805">
    <property type="entry name" value="ASMase/PPN1_MPP"/>
</dbReference>
<dbReference type="InterPro" id="IPR004843">
    <property type="entry name" value="Calcineurin-like_PHP_ApaH"/>
</dbReference>
<dbReference type="InterPro" id="IPR029052">
    <property type="entry name" value="Metallo-depent_PP-like"/>
</dbReference>
<dbReference type="InterPro" id="IPR007856">
    <property type="entry name" value="SapB_1"/>
</dbReference>
<dbReference type="InterPro" id="IPR011001">
    <property type="entry name" value="Saposin-like"/>
</dbReference>
<dbReference type="InterPro" id="IPR008139">
    <property type="entry name" value="SaposinB_dom"/>
</dbReference>
<dbReference type="InterPro" id="IPR011160">
    <property type="entry name" value="Sphingomy_PDE"/>
</dbReference>
<dbReference type="PANTHER" id="PTHR10340">
    <property type="entry name" value="SPHINGOMYELIN PHOSPHODIESTERASE"/>
    <property type="match status" value="1"/>
</dbReference>
<dbReference type="PANTHER" id="PTHR10340:SF34">
    <property type="entry name" value="SPHINGOMYELIN PHOSPHODIESTERASE"/>
    <property type="match status" value="1"/>
</dbReference>
<dbReference type="Pfam" id="PF19272">
    <property type="entry name" value="ASMase_C"/>
    <property type="match status" value="1"/>
</dbReference>
<dbReference type="Pfam" id="PF00149">
    <property type="entry name" value="Metallophos"/>
    <property type="match status" value="1"/>
</dbReference>
<dbReference type="Pfam" id="PF05184">
    <property type="entry name" value="SapB_1"/>
    <property type="match status" value="1"/>
</dbReference>
<dbReference type="PIRSF" id="PIRSF000948">
    <property type="entry name" value="Sphingomy_PDE"/>
    <property type="match status" value="1"/>
</dbReference>
<dbReference type="SMART" id="SM00741">
    <property type="entry name" value="SapB"/>
    <property type="match status" value="1"/>
</dbReference>
<dbReference type="SUPFAM" id="SSF56300">
    <property type="entry name" value="Metallo-dependent phosphatases"/>
    <property type="match status" value="1"/>
</dbReference>
<dbReference type="SUPFAM" id="SSF47862">
    <property type="entry name" value="Saposin"/>
    <property type="match status" value="1"/>
</dbReference>
<dbReference type="PROSITE" id="PS50015">
    <property type="entry name" value="SAP_B"/>
    <property type="match status" value="1"/>
</dbReference>
<feature type="signal peptide" evidence="3">
    <location>
        <begin position="1"/>
        <end position="20"/>
    </location>
</feature>
<feature type="chain" id="PRO_0000328188" description="Sphingomyelin phosphodiesterase B">
    <location>
        <begin position="21"/>
        <end position="637"/>
    </location>
</feature>
<feature type="domain" description="Saposin B-type" evidence="4">
    <location>
        <begin position="73"/>
        <end position="155"/>
    </location>
</feature>
<feature type="binding site" evidence="2">
    <location>
        <position position="191"/>
    </location>
    <ligand>
        <name>Zn(2+)</name>
        <dbReference type="ChEBI" id="CHEBI:29105"/>
        <label>1</label>
    </ligand>
</feature>
<feature type="binding site" evidence="2">
    <location>
        <position position="193"/>
    </location>
    <ligand>
        <name>Zn(2+)</name>
        <dbReference type="ChEBI" id="CHEBI:29105"/>
        <label>1</label>
    </ligand>
</feature>
<feature type="binding site" evidence="2">
    <location>
        <position position="263"/>
    </location>
    <ligand>
        <name>Zn(2+)</name>
        <dbReference type="ChEBI" id="CHEBI:29105"/>
        <label>1</label>
    </ligand>
</feature>
<feature type="binding site" evidence="2">
    <location>
        <position position="263"/>
    </location>
    <ligand>
        <name>Zn(2+)</name>
        <dbReference type="ChEBI" id="CHEBI:29105"/>
        <label>2</label>
    </ligand>
</feature>
<feature type="binding site" evidence="2">
    <location>
        <position position="304"/>
    </location>
    <ligand>
        <name>Zn(2+)</name>
        <dbReference type="ChEBI" id="CHEBI:29105"/>
        <label>2</label>
    </ligand>
</feature>
<feature type="binding site" evidence="2">
    <location>
        <position position="407"/>
    </location>
    <ligand>
        <name>Zn(2+)</name>
        <dbReference type="ChEBI" id="CHEBI:29105"/>
        <label>2</label>
    </ligand>
</feature>
<feature type="binding site" evidence="2">
    <location>
        <position position="441"/>
    </location>
    <ligand>
        <name>Zn(2+)</name>
        <dbReference type="ChEBI" id="CHEBI:29105"/>
        <label>2</label>
    </ligand>
</feature>
<feature type="binding site" evidence="2">
    <location>
        <position position="443"/>
    </location>
    <ligand>
        <name>Zn(2+)</name>
        <dbReference type="ChEBI" id="CHEBI:29105"/>
        <label>1</label>
    </ligand>
</feature>
<feature type="glycosylation site" description="N-linked (GlcNAc...) asparagine" evidence="4">
    <location>
        <position position="73"/>
    </location>
</feature>
<feature type="glycosylation site" description="N-linked (GlcNAc...) asparagine" evidence="4">
    <location>
        <position position="128"/>
    </location>
</feature>
<feature type="glycosylation site" description="N-linked (GlcNAc...) asparagine" evidence="4">
    <location>
        <position position="157"/>
    </location>
</feature>
<feature type="glycosylation site" description="N-linked (GlcNAc...) asparagine" evidence="4">
    <location>
        <position position="279"/>
    </location>
</feature>
<feature type="glycosylation site" description="N-linked (GlcNAc...) asparagine" evidence="4">
    <location>
        <position position="377"/>
    </location>
</feature>
<feature type="glycosylation site" description="N-linked (GlcNAc...) asparagine" evidence="4">
    <location>
        <position position="523"/>
    </location>
</feature>
<feature type="glycosylation site" description="N-linked (GlcNAc...) asparagine" evidence="4">
    <location>
        <position position="546"/>
    </location>
</feature>
<feature type="glycosylation site" description="N-linked (GlcNAc...) asparagine" evidence="4">
    <location>
        <position position="606"/>
    </location>
</feature>
<feature type="disulfide bond" evidence="4">
    <location>
        <begin position="77"/>
        <end position="151"/>
    </location>
</feature>
<feature type="disulfide bond" evidence="4">
    <location>
        <begin position="80"/>
        <end position="145"/>
    </location>
</feature>
<feature type="disulfide bond" evidence="4">
    <location>
        <begin position="108"/>
        <end position="119"/>
    </location>
</feature>
<feature type="disulfide bond" evidence="2">
    <location>
        <begin position="212"/>
        <end position="233"/>
    </location>
</feature>
<feature type="disulfide bond" evidence="2">
    <location>
        <begin position="582"/>
        <end position="595"/>
    </location>
</feature>
<accession>Q54C16</accession>
<reference key="1">
    <citation type="journal article" date="2005" name="Nature">
        <title>The genome of the social amoeba Dictyostelium discoideum.</title>
        <authorList>
            <person name="Eichinger L."/>
            <person name="Pachebat J.A."/>
            <person name="Gloeckner G."/>
            <person name="Rajandream M.A."/>
            <person name="Sucgang R."/>
            <person name="Berriman M."/>
            <person name="Song J."/>
            <person name="Olsen R."/>
            <person name="Szafranski K."/>
            <person name="Xu Q."/>
            <person name="Tunggal B."/>
            <person name="Kummerfeld S."/>
            <person name="Madera M."/>
            <person name="Konfortov B.A."/>
            <person name="Rivero F."/>
            <person name="Bankier A.T."/>
            <person name="Lehmann R."/>
            <person name="Hamlin N."/>
            <person name="Davies R."/>
            <person name="Gaudet P."/>
            <person name="Fey P."/>
            <person name="Pilcher K."/>
            <person name="Chen G."/>
            <person name="Saunders D."/>
            <person name="Sodergren E.J."/>
            <person name="Davis P."/>
            <person name="Kerhornou A."/>
            <person name="Nie X."/>
            <person name="Hall N."/>
            <person name="Anjard C."/>
            <person name="Hemphill L."/>
            <person name="Bason N."/>
            <person name="Farbrother P."/>
            <person name="Desany B."/>
            <person name="Just E."/>
            <person name="Morio T."/>
            <person name="Rost R."/>
            <person name="Churcher C.M."/>
            <person name="Cooper J."/>
            <person name="Haydock S."/>
            <person name="van Driessche N."/>
            <person name="Cronin A."/>
            <person name="Goodhead I."/>
            <person name="Muzny D.M."/>
            <person name="Mourier T."/>
            <person name="Pain A."/>
            <person name="Lu M."/>
            <person name="Harper D."/>
            <person name="Lindsay R."/>
            <person name="Hauser H."/>
            <person name="James K.D."/>
            <person name="Quiles M."/>
            <person name="Madan Babu M."/>
            <person name="Saito T."/>
            <person name="Buchrieser C."/>
            <person name="Wardroper A."/>
            <person name="Felder M."/>
            <person name="Thangavelu M."/>
            <person name="Johnson D."/>
            <person name="Knights A."/>
            <person name="Loulseged H."/>
            <person name="Mungall K.L."/>
            <person name="Oliver K."/>
            <person name="Price C."/>
            <person name="Quail M.A."/>
            <person name="Urushihara H."/>
            <person name="Hernandez J."/>
            <person name="Rabbinowitsch E."/>
            <person name="Steffen D."/>
            <person name="Sanders M."/>
            <person name="Ma J."/>
            <person name="Kohara Y."/>
            <person name="Sharp S."/>
            <person name="Simmonds M.N."/>
            <person name="Spiegler S."/>
            <person name="Tivey A."/>
            <person name="Sugano S."/>
            <person name="White B."/>
            <person name="Walker D."/>
            <person name="Woodward J.R."/>
            <person name="Winckler T."/>
            <person name="Tanaka Y."/>
            <person name="Shaulsky G."/>
            <person name="Schleicher M."/>
            <person name="Weinstock G.M."/>
            <person name="Rosenthal A."/>
            <person name="Cox E.C."/>
            <person name="Chisholm R.L."/>
            <person name="Gibbs R.A."/>
            <person name="Loomis W.F."/>
            <person name="Platzer M."/>
            <person name="Kay R.R."/>
            <person name="Williams J.G."/>
            <person name="Dear P.H."/>
            <person name="Noegel A.A."/>
            <person name="Barrell B.G."/>
            <person name="Kuspa A."/>
        </authorList>
    </citation>
    <scope>NUCLEOTIDE SEQUENCE [LARGE SCALE GENOMIC DNA]</scope>
    <source>
        <strain>AX4</strain>
    </source>
</reference>
<proteinExistence type="inferred from homology"/>
<evidence type="ECO:0000250" key="1"/>
<evidence type="ECO:0000250" key="2">
    <source>
        <dbReference type="UniProtKB" id="Q92484"/>
    </source>
</evidence>
<evidence type="ECO:0000255" key="3"/>
<evidence type="ECO:0000255" key="4">
    <source>
        <dbReference type="PROSITE-ProRule" id="PRU00415"/>
    </source>
</evidence>
<evidence type="ECO:0000305" key="5"/>